<name>ATPA_MESFL</name>
<reference key="1">
    <citation type="submission" date="2004-06" db="EMBL/GenBank/DDBJ databases">
        <authorList>
            <person name="Birren B.W."/>
            <person name="Stange-Thomann N."/>
            <person name="Hafez N."/>
            <person name="DeCaprio D."/>
            <person name="Fisher S."/>
            <person name="Butler J."/>
            <person name="Elkins T."/>
            <person name="Kodira C.D."/>
            <person name="Major J."/>
            <person name="Wang S."/>
            <person name="Nicol R."/>
            <person name="Nusbaum C."/>
        </authorList>
    </citation>
    <scope>NUCLEOTIDE SEQUENCE [LARGE SCALE GENOMIC DNA]</scope>
    <source>
        <strain>ATCC 33453 / NBRC 100688 / NCTC 11704 / L1</strain>
    </source>
</reference>
<dbReference type="EC" id="7.1.2.2" evidence="1"/>
<dbReference type="EMBL" id="AE017263">
    <property type="protein sequence ID" value="AAT75469.1"/>
    <property type="molecule type" value="Genomic_DNA"/>
</dbReference>
<dbReference type="RefSeq" id="WP_011183010.1">
    <property type="nucleotide sequence ID" value="NC_006055.1"/>
</dbReference>
<dbReference type="RefSeq" id="YP_053353.1">
    <property type="nucleotide sequence ID" value="NC_006055.1"/>
</dbReference>
<dbReference type="SMR" id="Q6F204"/>
<dbReference type="STRING" id="265311.Mfl113"/>
<dbReference type="PaxDb" id="265311-Mfl113"/>
<dbReference type="EnsemblBacteria" id="AAT75469">
    <property type="protein sequence ID" value="AAT75469"/>
    <property type="gene ID" value="Mfl113"/>
</dbReference>
<dbReference type="GeneID" id="2898208"/>
<dbReference type="KEGG" id="mfl:Mfl113"/>
<dbReference type="PATRIC" id="fig|265311.5.peg.114"/>
<dbReference type="eggNOG" id="COG0056">
    <property type="taxonomic scope" value="Bacteria"/>
</dbReference>
<dbReference type="HOGENOM" id="CLU_010091_2_1_14"/>
<dbReference type="OrthoDB" id="9803053at2"/>
<dbReference type="Proteomes" id="UP000006647">
    <property type="component" value="Chromosome"/>
</dbReference>
<dbReference type="GO" id="GO:0005886">
    <property type="term" value="C:plasma membrane"/>
    <property type="evidence" value="ECO:0007669"/>
    <property type="project" value="UniProtKB-SubCell"/>
</dbReference>
<dbReference type="GO" id="GO:0045259">
    <property type="term" value="C:proton-transporting ATP synthase complex"/>
    <property type="evidence" value="ECO:0007669"/>
    <property type="project" value="UniProtKB-KW"/>
</dbReference>
<dbReference type="GO" id="GO:0043531">
    <property type="term" value="F:ADP binding"/>
    <property type="evidence" value="ECO:0007669"/>
    <property type="project" value="TreeGrafter"/>
</dbReference>
<dbReference type="GO" id="GO:0005524">
    <property type="term" value="F:ATP binding"/>
    <property type="evidence" value="ECO:0007669"/>
    <property type="project" value="UniProtKB-UniRule"/>
</dbReference>
<dbReference type="GO" id="GO:0046933">
    <property type="term" value="F:proton-transporting ATP synthase activity, rotational mechanism"/>
    <property type="evidence" value="ECO:0007669"/>
    <property type="project" value="UniProtKB-UniRule"/>
</dbReference>
<dbReference type="CDD" id="cd18113">
    <property type="entry name" value="ATP-synt_F1_alpha_C"/>
    <property type="match status" value="1"/>
</dbReference>
<dbReference type="CDD" id="cd18116">
    <property type="entry name" value="ATP-synt_F1_alpha_N"/>
    <property type="match status" value="1"/>
</dbReference>
<dbReference type="CDD" id="cd01132">
    <property type="entry name" value="F1-ATPase_alpha_CD"/>
    <property type="match status" value="1"/>
</dbReference>
<dbReference type="FunFam" id="1.20.150.20:FF:000001">
    <property type="entry name" value="ATP synthase subunit alpha"/>
    <property type="match status" value="1"/>
</dbReference>
<dbReference type="FunFam" id="3.40.50.300:FF:000002">
    <property type="entry name" value="ATP synthase subunit alpha"/>
    <property type="match status" value="1"/>
</dbReference>
<dbReference type="Gene3D" id="2.40.30.20">
    <property type="match status" value="1"/>
</dbReference>
<dbReference type="Gene3D" id="1.20.150.20">
    <property type="entry name" value="ATP synthase alpha/beta chain, C-terminal domain"/>
    <property type="match status" value="1"/>
</dbReference>
<dbReference type="Gene3D" id="3.40.50.300">
    <property type="entry name" value="P-loop containing nucleotide triphosphate hydrolases"/>
    <property type="match status" value="1"/>
</dbReference>
<dbReference type="HAMAP" id="MF_01346">
    <property type="entry name" value="ATP_synth_alpha_bact"/>
    <property type="match status" value="1"/>
</dbReference>
<dbReference type="InterPro" id="IPR023366">
    <property type="entry name" value="ATP_synth_asu-like_sf"/>
</dbReference>
<dbReference type="InterPro" id="IPR000793">
    <property type="entry name" value="ATP_synth_asu_C"/>
</dbReference>
<dbReference type="InterPro" id="IPR038376">
    <property type="entry name" value="ATP_synth_asu_C_sf"/>
</dbReference>
<dbReference type="InterPro" id="IPR033732">
    <property type="entry name" value="ATP_synth_F1_a_nt-bd_dom"/>
</dbReference>
<dbReference type="InterPro" id="IPR005294">
    <property type="entry name" value="ATP_synth_F1_asu"/>
</dbReference>
<dbReference type="InterPro" id="IPR020003">
    <property type="entry name" value="ATPase_a/bsu_AS"/>
</dbReference>
<dbReference type="InterPro" id="IPR004100">
    <property type="entry name" value="ATPase_F1/V1/A1_a/bsu_N"/>
</dbReference>
<dbReference type="InterPro" id="IPR036121">
    <property type="entry name" value="ATPase_F1/V1/A1_a/bsu_N_sf"/>
</dbReference>
<dbReference type="InterPro" id="IPR000194">
    <property type="entry name" value="ATPase_F1/V1/A1_a/bsu_nucl-bd"/>
</dbReference>
<dbReference type="InterPro" id="IPR027417">
    <property type="entry name" value="P-loop_NTPase"/>
</dbReference>
<dbReference type="NCBIfam" id="TIGR00962">
    <property type="entry name" value="atpA"/>
    <property type="match status" value="1"/>
</dbReference>
<dbReference type="NCBIfam" id="NF009884">
    <property type="entry name" value="PRK13343.1"/>
    <property type="match status" value="1"/>
</dbReference>
<dbReference type="PANTHER" id="PTHR48082">
    <property type="entry name" value="ATP SYNTHASE SUBUNIT ALPHA, MITOCHONDRIAL"/>
    <property type="match status" value="1"/>
</dbReference>
<dbReference type="PANTHER" id="PTHR48082:SF2">
    <property type="entry name" value="ATP SYNTHASE SUBUNIT ALPHA, MITOCHONDRIAL"/>
    <property type="match status" value="1"/>
</dbReference>
<dbReference type="Pfam" id="PF00006">
    <property type="entry name" value="ATP-synt_ab"/>
    <property type="match status" value="1"/>
</dbReference>
<dbReference type="Pfam" id="PF00306">
    <property type="entry name" value="ATP-synt_ab_C"/>
    <property type="match status" value="1"/>
</dbReference>
<dbReference type="Pfam" id="PF02874">
    <property type="entry name" value="ATP-synt_ab_N"/>
    <property type="match status" value="1"/>
</dbReference>
<dbReference type="SUPFAM" id="SSF47917">
    <property type="entry name" value="C-terminal domain of alpha and beta subunits of F1 ATP synthase"/>
    <property type="match status" value="1"/>
</dbReference>
<dbReference type="SUPFAM" id="SSF50615">
    <property type="entry name" value="N-terminal domain of alpha and beta subunits of F1 ATP synthase"/>
    <property type="match status" value="1"/>
</dbReference>
<dbReference type="SUPFAM" id="SSF52540">
    <property type="entry name" value="P-loop containing nucleoside triphosphate hydrolases"/>
    <property type="match status" value="1"/>
</dbReference>
<dbReference type="PROSITE" id="PS00152">
    <property type="entry name" value="ATPASE_ALPHA_BETA"/>
    <property type="match status" value="1"/>
</dbReference>
<accession>Q6F204</accession>
<keyword id="KW-0066">ATP synthesis</keyword>
<keyword id="KW-0067">ATP-binding</keyword>
<keyword id="KW-1003">Cell membrane</keyword>
<keyword id="KW-0139">CF(1)</keyword>
<keyword id="KW-0375">Hydrogen ion transport</keyword>
<keyword id="KW-0406">Ion transport</keyword>
<keyword id="KW-0472">Membrane</keyword>
<keyword id="KW-0547">Nucleotide-binding</keyword>
<keyword id="KW-1185">Reference proteome</keyword>
<keyword id="KW-1278">Translocase</keyword>
<keyword id="KW-0813">Transport</keyword>
<proteinExistence type="inferred from homology"/>
<comment type="function">
    <text evidence="1">Produces ATP from ADP in the presence of a proton gradient across the membrane. The alpha chain is a regulatory subunit.</text>
</comment>
<comment type="catalytic activity">
    <reaction evidence="1">
        <text>ATP + H2O + 4 H(+)(in) = ADP + phosphate + 5 H(+)(out)</text>
        <dbReference type="Rhea" id="RHEA:57720"/>
        <dbReference type="ChEBI" id="CHEBI:15377"/>
        <dbReference type="ChEBI" id="CHEBI:15378"/>
        <dbReference type="ChEBI" id="CHEBI:30616"/>
        <dbReference type="ChEBI" id="CHEBI:43474"/>
        <dbReference type="ChEBI" id="CHEBI:456216"/>
        <dbReference type="EC" id="7.1.2.2"/>
    </reaction>
</comment>
<comment type="subunit">
    <text evidence="1">F-type ATPases have 2 components, CF(1) - the catalytic core - and CF(0) - the membrane proton channel. CF(1) has five subunits: alpha(3), beta(3), gamma(1), delta(1), epsilon(1). CF(0) has three main subunits: a(1), b(2) and c(9-12). The alpha and beta chains form an alternating ring which encloses part of the gamma chain. CF(1) is attached to CF(0) by a central stalk formed by the gamma and epsilon chains, while a peripheral stalk is formed by the delta and b chains.</text>
</comment>
<comment type="subcellular location">
    <subcellularLocation>
        <location evidence="1">Cell membrane</location>
        <topology evidence="1">Peripheral membrane protein</topology>
    </subcellularLocation>
</comment>
<comment type="similarity">
    <text evidence="1">Belongs to the ATPase alpha/beta chains family.</text>
</comment>
<protein>
    <recommendedName>
        <fullName evidence="1">ATP synthase subunit alpha</fullName>
        <ecNumber evidence="1">7.1.2.2</ecNumber>
    </recommendedName>
    <alternativeName>
        <fullName evidence="1">ATP synthase F1 sector subunit alpha</fullName>
    </alternativeName>
    <alternativeName>
        <fullName evidence="1">F-ATPase subunit alpha</fullName>
    </alternativeName>
</protein>
<feature type="chain" id="PRO_0000238285" description="ATP synthase subunit alpha">
    <location>
        <begin position="1"/>
        <end position="525"/>
    </location>
</feature>
<feature type="binding site" evidence="1">
    <location>
        <begin position="169"/>
        <end position="176"/>
    </location>
    <ligand>
        <name>ATP</name>
        <dbReference type="ChEBI" id="CHEBI:30616"/>
    </ligand>
</feature>
<feature type="site" description="Required for activity" evidence="1">
    <location>
        <position position="362"/>
    </location>
</feature>
<sequence length="525" mass="57500">MALNIKEISEVIEKQIKNYGKDIIEAEQGSVVTIGDGVSLIYGLDKALMGELLIFPNDVYGMVLSLEEGAVGAVILGDYKLIKEGDIVKRTGKVVETPVGDAMIGRVVNALGQPIDNNGPIKTKKSKPVERIATGVMARKSVSQPLETGILGIDASIPIGKGQRELIIGDRQTGKTAVAIDTIINQKGKNVKCIYVSIGQKDSTIAQVVEKLKKFGAMEYTTVVNAGASDSAPLQYLAPYTGVTIGEEWMENGEDVLIVYDDLSKHAVAYREMSLLLRRPPGREAYPGDVFYLHSRLLERAARVNEKFGGGSITALPIIETQASDISAYIPTNVISITDGQIFLSSDLFMAGIRPAINIGPSVSRVGSSAQIKAVKQVSGTLKLELAQYYELEAFSKFGSDLDESTKATLDHGARIIQMLVQRQYSPLNQIDEAIILFAIKSHLIKWIPLENIRDFKTEIITFFNNEKDAKALKAELTKKLEWNADLESGIQKEIEKLVVKFTSTLKNYNPTIFGDEKEFKKLGK</sequence>
<evidence type="ECO:0000255" key="1">
    <source>
        <dbReference type="HAMAP-Rule" id="MF_01346"/>
    </source>
</evidence>
<organism>
    <name type="scientific">Mesoplasma florum (strain ATCC 33453 / NBRC 100688 / NCTC 11704 / L1)</name>
    <name type="common">Acholeplasma florum</name>
    <dbReference type="NCBI Taxonomy" id="265311"/>
    <lineage>
        <taxon>Bacteria</taxon>
        <taxon>Bacillati</taxon>
        <taxon>Mycoplasmatota</taxon>
        <taxon>Mollicutes</taxon>
        <taxon>Entomoplasmatales</taxon>
        <taxon>Entomoplasmataceae</taxon>
        <taxon>Mesoplasma</taxon>
    </lineage>
</organism>
<gene>
    <name evidence="1" type="primary">atpA</name>
    <name type="ordered locus">Mfl113</name>
</gene>